<accession>Q1RMZ1</accession>
<accession>Q8N3D0</accession>
<accession>Q96MV7</accession>
<keyword id="KW-0489">Methyltransferase</keyword>
<keyword id="KW-1267">Proteomics identification</keyword>
<keyword id="KW-1185">Reference proteome</keyword>
<keyword id="KW-0949">S-adenosyl-L-methionine</keyword>
<keyword id="KW-0808">Transferase</keyword>
<dbReference type="EC" id="2.1.1.-" evidence="1"/>
<dbReference type="EMBL" id="AK056380">
    <property type="protein sequence ID" value="BAB71169.1"/>
    <property type="status" value="ALT_FRAME"/>
    <property type="molecule type" value="mRNA"/>
</dbReference>
<dbReference type="EMBL" id="CH471070">
    <property type="protein sequence ID" value="EAW83474.1"/>
    <property type="molecule type" value="Genomic_DNA"/>
</dbReference>
<dbReference type="EMBL" id="BC114615">
    <property type="protein sequence ID" value="AAI14616.1"/>
    <property type="molecule type" value="mRNA"/>
</dbReference>
<dbReference type="EMBL" id="AL834437">
    <property type="protein sequence ID" value="CAD39097.1"/>
    <property type="molecule type" value="mRNA"/>
</dbReference>
<dbReference type="CCDS" id="CCDS43634.1"/>
<dbReference type="RefSeq" id="NP_689769.2">
    <property type="nucleotide sequence ID" value="NM_152556.3"/>
</dbReference>
<dbReference type="SMR" id="Q1RMZ1"/>
<dbReference type="BioGRID" id="127552">
    <property type="interactions" value="22"/>
</dbReference>
<dbReference type="FunCoup" id="Q1RMZ1">
    <property type="interactions" value="1454"/>
</dbReference>
<dbReference type="IntAct" id="Q1RMZ1">
    <property type="interactions" value="24"/>
</dbReference>
<dbReference type="MINT" id="Q1RMZ1"/>
<dbReference type="STRING" id="9606.ENSP00000297145"/>
<dbReference type="GlyGen" id="Q1RMZ1">
    <property type="glycosylation" value="1 site, 1 O-linked glycan (1 site)"/>
</dbReference>
<dbReference type="iPTMnet" id="Q1RMZ1"/>
<dbReference type="PhosphoSitePlus" id="Q1RMZ1"/>
<dbReference type="BioMuta" id="BMT2"/>
<dbReference type="DMDM" id="121947576"/>
<dbReference type="jPOST" id="Q1RMZ1"/>
<dbReference type="MassIVE" id="Q1RMZ1"/>
<dbReference type="PaxDb" id="9606-ENSP00000297145"/>
<dbReference type="PeptideAtlas" id="Q1RMZ1"/>
<dbReference type="ProteomicsDB" id="61242"/>
<dbReference type="TopDownProteomics" id="Q1RMZ1"/>
<dbReference type="Antibodypedia" id="50763">
    <property type="antibodies" value="13 antibodies from 8 providers"/>
</dbReference>
<dbReference type="DNASU" id="154743"/>
<dbReference type="Ensembl" id="ENST00000297145.9">
    <property type="protein sequence ID" value="ENSP00000297145.4"/>
    <property type="gene ID" value="ENSG00000164603.12"/>
</dbReference>
<dbReference type="GeneID" id="154743"/>
<dbReference type="KEGG" id="hsa:154743"/>
<dbReference type="MANE-Select" id="ENST00000297145.9">
    <property type="protein sequence ID" value="ENSP00000297145.4"/>
    <property type="RefSeq nucleotide sequence ID" value="NM_152556.3"/>
    <property type="RefSeq protein sequence ID" value="NP_689769.2"/>
</dbReference>
<dbReference type="UCSC" id="uc003vgo.2">
    <property type="organism name" value="human"/>
</dbReference>
<dbReference type="AGR" id="HGNC:26475"/>
<dbReference type="CTD" id="154743"/>
<dbReference type="GeneCards" id="SAMTOR"/>
<dbReference type="HGNC" id="HGNC:26475">
    <property type="gene designation" value="SAMTOR"/>
</dbReference>
<dbReference type="HPA" id="ENSG00000164603">
    <property type="expression patterns" value="Low tissue specificity"/>
</dbReference>
<dbReference type="MIM" id="617855">
    <property type="type" value="gene"/>
</dbReference>
<dbReference type="neXtProt" id="NX_Q1RMZ1"/>
<dbReference type="OpenTargets" id="ENSG00000164603"/>
<dbReference type="PharmGKB" id="PA162380700"/>
<dbReference type="VEuPathDB" id="HostDB:ENSG00000164603"/>
<dbReference type="eggNOG" id="ENOG502QRK4">
    <property type="taxonomic scope" value="Eukaryota"/>
</dbReference>
<dbReference type="GeneTree" id="ENSGT00390000010382"/>
<dbReference type="HOGENOM" id="CLU_036404_1_1_1"/>
<dbReference type="InParanoid" id="Q1RMZ1"/>
<dbReference type="OMA" id="CCQKAYE"/>
<dbReference type="OrthoDB" id="5954793at2759"/>
<dbReference type="PAN-GO" id="Q1RMZ1">
    <property type="GO annotations" value="1 GO annotation based on evolutionary models"/>
</dbReference>
<dbReference type="PhylomeDB" id="Q1RMZ1"/>
<dbReference type="TreeFam" id="TF324724"/>
<dbReference type="PathwayCommons" id="Q1RMZ1"/>
<dbReference type="Reactome" id="R-HSA-9639288">
    <property type="pathway name" value="Amino acids regulate mTORC1"/>
</dbReference>
<dbReference type="SignaLink" id="Q1RMZ1"/>
<dbReference type="BioGRID-ORCS" id="154743">
    <property type="hits" value="11 hits in 1140 CRISPR screens"/>
</dbReference>
<dbReference type="ChiTaRS" id="BMT2">
    <property type="organism name" value="human"/>
</dbReference>
<dbReference type="GenomeRNAi" id="154743"/>
<dbReference type="Pharos" id="Q1RMZ1">
    <property type="development level" value="Tbio"/>
</dbReference>
<dbReference type="PRO" id="PR:Q1RMZ1"/>
<dbReference type="Proteomes" id="UP000005640">
    <property type="component" value="Chromosome 7"/>
</dbReference>
<dbReference type="RNAct" id="Q1RMZ1">
    <property type="molecule type" value="protein"/>
</dbReference>
<dbReference type="Bgee" id="ENSG00000164603">
    <property type="expression patterns" value="Expressed in secondary oocyte and 174 other cell types or tissues"/>
</dbReference>
<dbReference type="ExpressionAtlas" id="Q1RMZ1">
    <property type="expression patterns" value="baseline and differential"/>
</dbReference>
<dbReference type="GO" id="GO:0005829">
    <property type="term" value="C:cytosol"/>
    <property type="evidence" value="ECO:0000304"/>
    <property type="project" value="Reactome"/>
</dbReference>
<dbReference type="GO" id="GO:0008168">
    <property type="term" value="F:methyltransferase activity"/>
    <property type="evidence" value="ECO:0007669"/>
    <property type="project" value="UniProtKB-UniRule"/>
</dbReference>
<dbReference type="GO" id="GO:0044877">
    <property type="term" value="F:protein-containing complex binding"/>
    <property type="evidence" value="ECO:0000314"/>
    <property type="project" value="FlyBase"/>
</dbReference>
<dbReference type="GO" id="GO:1904047">
    <property type="term" value="F:S-adenosyl-L-methionine binding"/>
    <property type="evidence" value="ECO:0000314"/>
    <property type="project" value="UniProtKB"/>
</dbReference>
<dbReference type="GO" id="GO:0034198">
    <property type="term" value="P:cellular response to amino acid starvation"/>
    <property type="evidence" value="ECO:0000314"/>
    <property type="project" value="UniProtKB"/>
</dbReference>
<dbReference type="GO" id="GO:0061431">
    <property type="term" value="P:cellular response to methionine"/>
    <property type="evidence" value="ECO:0000314"/>
    <property type="project" value="UniProtKB"/>
</dbReference>
<dbReference type="GO" id="GO:0032259">
    <property type="term" value="P:methylation"/>
    <property type="evidence" value="ECO:0007669"/>
    <property type="project" value="UniProtKB-KW"/>
</dbReference>
<dbReference type="GO" id="GO:1904262">
    <property type="term" value="P:negative regulation of TORC1 signaling"/>
    <property type="evidence" value="ECO:0000318"/>
    <property type="project" value="GO_Central"/>
</dbReference>
<dbReference type="GO" id="GO:1904263">
    <property type="term" value="P:positive regulation of TORC1 signaling"/>
    <property type="evidence" value="ECO:0000314"/>
    <property type="project" value="UniProt"/>
</dbReference>
<dbReference type="GO" id="GO:1903432">
    <property type="term" value="P:regulation of TORC1 signaling"/>
    <property type="evidence" value="ECO:0000314"/>
    <property type="project" value="UniProtKB"/>
</dbReference>
<dbReference type="FunFam" id="3.40.50.150:FF:000089">
    <property type="entry name" value="S-adenosylmethionine sensor upstream of mTORC1"/>
    <property type="match status" value="1"/>
</dbReference>
<dbReference type="Gene3D" id="3.40.50.150">
    <property type="entry name" value="Vaccinia Virus protein VP39"/>
    <property type="match status" value="1"/>
</dbReference>
<dbReference type="HAMAP" id="MF_03044">
    <property type="entry name" value="BMT2"/>
    <property type="match status" value="1"/>
</dbReference>
<dbReference type="InterPro" id="IPR021867">
    <property type="entry name" value="Bmt2/SAMTOR"/>
</dbReference>
<dbReference type="InterPro" id="IPR029063">
    <property type="entry name" value="SAM-dependent_MTases_sf"/>
</dbReference>
<dbReference type="PANTHER" id="PTHR21008:SF0">
    <property type="entry name" value="S-ADENOSYLMETHIONINE SENSOR UPSTREAM OF MTORC1"/>
    <property type="match status" value="1"/>
</dbReference>
<dbReference type="PANTHER" id="PTHR21008">
    <property type="entry name" value="S-ADENOSYLMETHIONINE SENSOR UPSTREAM OF MTORC1-RELATED"/>
    <property type="match status" value="1"/>
</dbReference>
<dbReference type="Pfam" id="PF11968">
    <property type="entry name" value="Bmt2"/>
    <property type="match status" value="1"/>
</dbReference>
<dbReference type="SUPFAM" id="SSF53335">
    <property type="entry name" value="S-adenosyl-L-methionine-dependent methyltransferases"/>
    <property type="match status" value="1"/>
</dbReference>
<organism>
    <name type="scientific">Homo sapiens</name>
    <name type="common">Human</name>
    <dbReference type="NCBI Taxonomy" id="9606"/>
    <lineage>
        <taxon>Eukaryota</taxon>
        <taxon>Metazoa</taxon>
        <taxon>Chordata</taxon>
        <taxon>Craniata</taxon>
        <taxon>Vertebrata</taxon>
        <taxon>Euteleostomi</taxon>
        <taxon>Mammalia</taxon>
        <taxon>Eutheria</taxon>
        <taxon>Euarchontoglires</taxon>
        <taxon>Primates</taxon>
        <taxon>Haplorrhini</taxon>
        <taxon>Catarrhini</taxon>
        <taxon>Hominidae</taxon>
        <taxon>Homo</taxon>
    </lineage>
</organism>
<gene>
    <name evidence="6 9" type="primary">SAMTOR</name>
    <name evidence="1" type="synonym">BMT2</name>
    <name evidence="9" type="synonym">C7orf60</name>
</gene>
<reference key="1">
    <citation type="journal article" date="2004" name="Nat. Genet.">
        <title>Complete sequencing and characterization of 21,243 full-length human cDNAs.</title>
        <authorList>
            <person name="Ota T."/>
            <person name="Suzuki Y."/>
            <person name="Nishikawa T."/>
            <person name="Otsuki T."/>
            <person name="Sugiyama T."/>
            <person name="Irie R."/>
            <person name="Wakamatsu A."/>
            <person name="Hayashi K."/>
            <person name="Sato H."/>
            <person name="Nagai K."/>
            <person name="Kimura K."/>
            <person name="Makita H."/>
            <person name="Sekine M."/>
            <person name="Obayashi M."/>
            <person name="Nishi T."/>
            <person name="Shibahara T."/>
            <person name="Tanaka T."/>
            <person name="Ishii S."/>
            <person name="Yamamoto J."/>
            <person name="Saito K."/>
            <person name="Kawai Y."/>
            <person name="Isono Y."/>
            <person name="Nakamura Y."/>
            <person name="Nagahari K."/>
            <person name="Murakami K."/>
            <person name="Yasuda T."/>
            <person name="Iwayanagi T."/>
            <person name="Wagatsuma M."/>
            <person name="Shiratori A."/>
            <person name="Sudo H."/>
            <person name="Hosoiri T."/>
            <person name="Kaku Y."/>
            <person name="Kodaira H."/>
            <person name="Kondo H."/>
            <person name="Sugawara M."/>
            <person name="Takahashi M."/>
            <person name="Kanda K."/>
            <person name="Yokoi T."/>
            <person name="Furuya T."/>
            <person name="Kikkawa E."/>
            <person name="Omura Y."/>
            <person name="Abe K."/>
            <person name="Kamihara K."/>
            <person name="Katsuta N."/>
            <person name="Sato K."/>
            <person name="Tanikawa M."/>
            <person name="Yamazaki M."/>
            <person name="Ninomiya K."/>
            <person name="Ishibashi T."/>
            <person name="Yamashita H."/>
            <person name="Murakawa K."/>
            <person name="Fujimori K."/>
            <person name="Tanai H."/>
            <person name="Kimata M."/>
            <person name="Watanabe M."/>
            <person name="Hiraoka S."/>
            <person name="Chiba Y."/>
            <person name="Ishida S."/>
            <person name="Ono Y."/>
            <person name="Takiguchi S."/>
            <person name="Watanabe S."/>
            <person name="Yosida M."/>
            <person name="Hotuta T."/>
            <person name="Kusano J."/>
            <person name="Kanehori K."/>
            <person name="Takahashi-Fujii A."/>
            <person name="Hara H."/>
            <person name="Tanase T.-O."/>
            <person name="Nomura Y."/>
            <person name="Togiya S."/>
            <person name="Komai F."/>
            <person name="Hara R."/>
            <person name="Takeuchi K."/>
            <person name="Arita M."/>
            <person name="Imose N."/>
            <person name="Musashino K."/>
            <person name="Yuuki H."/>
            <person name="Oshima A."/>
            <person name="Sasaki N."/>
            <person name="Aotsuka S."/>
            <person name="Yoshikawa Y."/>
            <person name="Matsunawa H."/>
            <person name="Ichihara T."/>
            <person name="Shiohata N."/>
            <person name="Sano S."/>
            <person name="Moriya S."/>
            <person name="Momiyama H."/>
            <person name="Satoh N."/>
            <person name="Takami S."/>
            <person name="Terashima Y."/>
            <person name="Suzuki O."/>
            <person name="Nakagawa S."/>
            <person name="Senoh A."/>
            <person name="Mizoguchi H."/>
            <person name="Goto Y."/>
            <person name="Shimizu F."/>
            <person name="Wakebe H."/>
            <person name="Hishigaki H."/>
            <person name="Watanabe T."/>
            <person name="Sugiyama A."/>
            <person name="Takemoto M."/>
            <person name="Kawakami B."/>
            <person name="Yamazaki M."/>
            <person name="Watanabe K."/>
            <person name="Kumagai A."/>
            <person name="Itakura S."/>
            <person name="Fukuzumi Y."/>
            <person name="Fujimori Y."/>
            <person name="Komiyama M."/>
            <person name="Tashiro H."/>
            <person name="Tanigami A."/>
            <person name="Fujiwara T."/>
            <person name="Ono T."/>
            <person name="Yamada K."/>
            <person name="Fujii Y."/>
            <person name="Ozaki K."/>
            <person name="Hirao M."/>
            <person name="Ohmori Y."/>
            <person name="Kawabata A."/>
            <person name="Hikiji T."/>
            <person name="Kobatake N."/>
            <person name="Inagaki H."/>
            <person name="Ikema Y."/>
            <person name="Okamoto S."/>
            <person name="Okitani R."/>
            <person name="Kawakami T."/>
            <person name="Noguchi S."/>
            <person name="Itoh T."/>
            <person name="Shigeta K."/>
            <person name="Senba T."/>
            <person name="Matsumura K."/>
            <person name="Nakajima Y."/>
            <person name="Mizuno T."/>
            <person name="Morinaga M."/>
            <person name="Sasaki M."/>
            <person name="Togashi T."/>
            <person name="Oyama M."/>
            <person name="Hata H."/>
            <person name="Watanabe M."/>
            <person name="Komatsu T."/>
            <person name="Mizushima-Sugano J."/>
            <person name="Satoh T."/>
            <person name="Shirai Y."/>
            <person name="Takahashi Y."/>
            <person name="Nakagawa K."/>
            <person name="Okumura K."/>
            <person name="Nagase T."/>
            <person name="Nomura N."/>
            <person name="Kikuchi H."/>
            <person name="Masuho Y."/>
            <person name="Yamashita R."/>
            <person name="Nakai K."/>
            <person name="Yada T."/>
            <person name="Nakamura Y."/>
            <person name="Ohara O."/>
            <person name="Isogai T."/>
            <person name="Sugano S."/>
        </authorList>
    </citation>
    <scope>NUCLEOTIDE SEQUENCE [LARGE SCALE MRNA]</scope>
</reference>
<reference key="2">
    <citation type="submission" date="2005-07" db="EMBL/GenBank/DDBJ databases">
        <authorList>
            <person name="Mural R.J."/>
            <person name="Istrail S."/>
            <person name="Sutton G.G."/>
            <person name="Florea L."/>
            <person name="Halpern A.L."/>
            <person name="Mobarry C.M."/>
            <person name="Lippert R."/>
            <person name="Walenz B."/>
            <person name="Shatkay H."/>
            <person name="Dew I."/>
            <person name="Miller J.R."/>
            <person name="Flanigan M.J."/>
            <person name="Edwards N.J."/>
            <person name="Bolanos R."/>
            <person name="Fasulo D."/>
            <person name="Halldorsson B.V."/>
            <person name="Hannenhalli S."/>
            <person name="Turner R."/>
            <person name="Yooseph S."/>
            <person name="Lu F."/>
            <person name="Nusskern D.R."/>
            <person name="Shue B.C."/>
            <person name="Zheng X.H."/>
            <person name="Zhong F."/>
            <person name="Delcher A.L."/>
            <person name="Huson D.H."/>
            <person name="Kravitz S.A."/>
            <person name="Mouchard L."/>
            <person name="Reinert K."/>
            <person name="Remington K.A."/>
            <person name="Clark A.G."/>
            <person name="Waterman M.S."/>
            <person name="Eichler E.E."/>
            <person name="Adams M.D."/>
            <person name="Hunkapiller M.W."/>
            <person name="Myers E.W."/>
            <person name="Venter J.C."/>
        </authorList>
    </citation>
    <scope>NUCLEOTIDE SEQUENCE [LARGE SCALE GENOMIC DNA]</scope>
</reference>
<reference key="3">
    <citation type="journal article" date="2004" name="Genome Res.">
        <title>The status, quality, and expansion of the NIH full-length cDNA project: the Mammalian Gene Collection (MGC).</title>
        <authorList>
            <consortium name="The MGC Project Team"/>
        </authorList>
    </citation>
    <scope>NUCLEOTIDE SEQUENCE [LARGE SCALE MRNA]</scope>
</reference>
<reference key="4">
    <citation type="journal article" date="2007" name="BMC Genomics">
        <title>The full-ORF clone resource of the German cDNA consortium.</title>
        <authorList>
            <person name="Bechtel S."/>
            <person name="Rosenfelder H."/>
            <person name="Duda A."/>
            <person name="Schmidt C.P."/>
            <person name="Ernst U."/>
            <person name="Wellenreuther R."/>
            <person name="Mehrle A."/>
            <person name="Schuster C."/>
            <person name="Bahr A."/>
            <person name="Bloecker H."/>
            <person name="Heubner D."/>
            <person name="Hoerlein A."/>
            <person name="Michel G."/>
            <person name="Wedler H."/>
            <person name="Koehrer K."/>
            <person name="Ottenwaelder B."/>
            <person name="Poustka A."/>
            <person name="Wiemann S."/>
            <person name="Schupp I."/>
        </authorList>
    </citation>
    <scope>NUCLEOTIDE SEQUENCE [LARGE SCALE MRNA] OF 27-405</scope>
    <source>
        <tissue>Melanoma</tissue>
    </source>
</reference>
<reference key="5">
    <citation type="journal article" date="2017" name="Science">
        <title>SAMTOR is an S-adenosylmethionine sensor for the mTORC1 pathway.</title>
        <authorList>
            <person name="Gu X."/>
            <person name="Orozco J.M."/>
            <person name="Saxton R.A."/>
            <person name="Condon K.J."/>
            <person name="Liu G.Y."/>
            <person name="Krawczyk P.A."/>
            <person name="Scaria S.M."/>
            <person name="Harper J.W."/>
            <person name="Gygi S.P."/>
            <person name="Sabatini D.M."/>
        </authorList>
    </citation>
    <scope>FUNCTION</scope>
    <scope>INTERACTION WITH THE GATOR1 AND KICSTOR COMPLEXES</scope>
</reference>
<reference key="6">
    <citation type="journal article" date="2018" name="Nature">
        <title>Architecture of the human GATOR1 and GATOR1-Rag GTPases complexes.</title>
        <authorList>
            <person name="Shen K."/>
            <person name="Huang R.K."/>
            <person name="Brignole E.J."/>
            <person name="Condon K.J."/>
            <person name="Valenstein M.L."/>
            <person name="Chantranupong L."/>
            <person name="Bomaliyamu A."/>
            <person name="Choe A."/>
            <person name="Hong C."/>
            <person name="Yu Z."/>
            <person name="Sabatini D.M."/>
        </authorList>
    </citation>
    <scope>INTERACTION WITH DEPDC5</scope>
</reference>
<reference key="7">
    <citation type="journal article" date="2022" name="Sci. Adv.">
        <title>Molecular mechanism of S-adenosylmethionine sensing by SAMTOR in mTORC1 signaling.</title>
        <authorList>
            <person name="Tang X."/>
            <person name="Zhang Y."/>
            <person name="Wang G."/>
            <person name="Zhang C."/>
            <person name="Wang F."/>
            <person name="Shi J."/>
            <person name="Zhang T."/>
            <person name="Ding J."/>
        </authorList>
    </citation>
    <scope>FUNCTION</scope>
    <scope>INTERACTION WITH THE GATOR1 AND KICSTOR COMPLEXES</scope>
    <scope>MUTAGENESIS OF ARG-95; PHE-175; ASP-190 AND ASP-202</scope>
</reference>
<evidence type="ECO:0000255" key="1">
    <source>
        <dbReference type="HAMAP-Rule" id="MF_03044"/>
    </source>
</evidence>
<evidence type="ECO:0000256" key="2">
    <source>
        <dbReference type="SAM" id="MobiDB-lite"/>
    </source>
</evidence>
<evidence type="ECO:0000269" key="3">
    <source>
    </source>
</evidence>
<evidence type="ECO:0000269" key="4">
    <source>
    </source>
</evidence>
<evidence type="ECO:0000269" key="5">
    <source>
    </source>
</evidence>
<evidence type="ECO:0000303" key="6">
    <source>
    </source>
</evidence>
<evidence type="ECO:0000305" key="7"/>
<evidence type="ECO:0000305" key="8">
    <source>
    </source>
</evidence>
<evidence type="ECO:0000312" key="9">
    <source>
        <dbReference type="HGNC" id="HGNC:26475"/>
    </source>
</evidence>
<sequence>MEPGAGGRNTARAQRAGSPNTPPPREQERKLEQEKLSGVVKSVHRRLRKKYREVGDFDKIWREHCEDEETLCEYAVAMKNLADNHWAKTCEGEGRIEWCCSVCREYFQNGGKRKALEKDEKRAVLATKTTPALNMHESSQLEGHLTNLSFTNPEFITELLQASGKIRLLDVGSCFNPFLKFEEFLTVGIDIVPAVESVYKCDFLNLQLQQPLQLAQDAIDAFLKQLKNPIDSLPGELFHVVVFSLLLSYFPSPYQRWICCKKAHELLVLNGLLLIITPDSSHQNRHAMMMKSWKIAIESLGFKRFKYSKFSHMHLMAFRKISLKTTSDLVSRNYPGMLYIPQDFNSIEDEEYSNPSCYVRSDIEDEQLAYGFTELPDAPYDSDSGESQASSIPFYELEDPILLLS</sequence>
<proteinExistence type="evidence at protein level"/>
<feature type="chain" id="PRO_0000321539" description="S-adenosylmethionine sensor upstream of mTORC1">
    <location>
        <begin position="1"/>
        <end position="405"/>
    </location>
</feature>
<feature type="region of interest" description="Disordered" evidence="2">
    <location>
        <begin position="1"/>
        <end position="34"/>
    </location>
</feature>
<feature type="compositionally biased region" description="Basic and acidic residues" evidence="2">
    <location>
        <begin position="25"/>
        <end position="34"/>
    </location>
</feature>
<feature type="binding site" evidence="1 8">
    <location>
        <position position="95"/>
    </location>
    <ligand>
        <name>S-adenosyl-L-methionine</name>
        <dbReference type="ChEBI" id="CHEBI:59789"/>
    </ligand>
</feature>
<feature type="binding site" evidence="1 3">
    <location>
        <position position="172"/>
    </location>
    <ligand>
        <name>S-adenosyl-L-methionine</name>
        <dbReference type="ChEBI" id="CHEBI:59789"/>
    </ligand>
</feature>
<feature type="binding site" evidence="1 3">
    <location>
        <position position="190"/>
    </location>
    <ligand>
        <name>S-adenosyl-L-methionine</name>
        <dbReference type="ChEBI" id="CHEBI:59789"/>
    </ligand>
</feature>
<feature type="binding site" evidence="1 8">
    <location>
        <position position="202"/>
    </location>
    <ligand>
        <name>S-adenosyl-L-methionine</name>
        <dbReference type="ChEBI" id="CHEBI:59789"/>
    </ligand>
</feature>
<feature type="binding site" evidence="1">
    <location>
        <position position="203"/>
    </location>
    <ligand>
        <name>S-adenosyl-L-methionine</name>
        <dbReference type="ChEBI" id="CHEBI:59789"/>
    </ligand>
</feature>
<feature type="binding site" evidence="1">
    <location>
        <position position="244"/>
    </location>
    <ligand>
        <name>S-adenosyl-L-methionine</name>
        <dbReference type="ChEBI" id="CHEBI:59789"/>
    </ligand>
</feature>
<feature type="mutagenesis site" description="Abolished binding to S-adenosyl-L-methionine without affecting ability to associate with GATOR1 and KICSTOR complexes." evidence="5">
    <original>R</original>
    <variation>A</variation>
    <location>
        <position position="95"/>
    </location>
</feature>
<feature type="mutagenesis site" description="Strongly decreased ability to associate with GATOR1 and KICSTOR complexes." evidence="5">
    <original>F</original>
    <variation>A</variation>
    <location>
        <position position="175"/>
    </location>
</feature>
<feature type="mutagenesis site" description="Abolished binding to S-adenosyl-L-methionine without affecting ability to associate with GATOR1 and KICSTOR complexes." evidence="5">
    <original>D</original>
    <variation>A</variation>
    <location>
        <position position="190"/>
    </location>
</feature>
<feature type="mutagenesis site" description="Abolished binding to S-adenosyl-L-methionine without affecting ability to associate with GATOR1 and KICSTOR complexes." evidence="5">
    <original>D</original>
    <variation>A</variation>
    <location>
        <position position="202"/>
    </location>
</feature>
<feature type="sequence conflict" description="In Ref. 1; BAB71169." evidence="7" ref="1">
    <original>I</original>
    <variation>T</variation>
    <location>
        <position position="219"/>
    </location>
</feature>
<comment type="function">
    <text evidence="1 3 5">S-adenosyl-L-methionine-binding protein that acts as an inhibitor of mTORC1 signaling via interaction with the GATOR1 and KICSTOR complexes (PubMed:29123071, PubMed:35776786). Acts as a sensor of S-adenosyl-L-methionine to signal methionine sufficiency to mTORC1: in presence of methionine, binds S-adenosyl-L-methionine, leading to disrupt interaction with the GATOR1 and KICSTOR complexes and promote mTORC1 signaling (PubMed:29123071, PubMed:35776786). Upon methionine starvation, S-adenosyl-L-methionine levels are reduced, thereby promoting the association with GATOR1 and KICSTOR, leading to inhibit mTORC1 signaling (PubMed:29123071, PubMed:35776786). Probably also acts as a S-adenosyl-L-methionine-dependent methyltransferase (Potential).</text>
</comment>
<comment type="subunit">
    <text evidence="1 3 4 5">Interacts with the DEPDC5 subunit of the GATOR1 complex; interaction is disrupted when SAMTOR binds S-adenosyl-L-methionine (PubMed:29123071, PubMed:29590090, PubMed:35776786). Interacts with the KICSTOR complex; interaction is disrupted when SAMTOR binds S-adenosyl-L-methionine (PubMed:29123071, PubMed:35776786).</text>
</comment>
<comment type="similarity">
    <text evidence="1">Belongs to the BMT2/SAMTOR family.</text>
</comment>
<comment type="sequence caution" evidence="7">
    <conflict type="frameshift">
        <sequence resource="EMBL-CDS" id="BAB71169"/>
    </conflict>
</comment>
<protein>
    <recommendedName>
        <fullName evidence="1 6">S-adenosylmethionine sensor upstream of mTORC1</fullName>
    </recommendedName>
    <alternativeName>
        <fullName evidence="1">Probable methyltransferase BMT2 homolog</fullName>
        <ecNumber evidence="1">2.1.1.-</ecNumber>
    </alternativeName>
</protein>
<name>SAMTR_HUMAN</name>